<dbReference type="EMBL" id="L42023">
    <property type="protein sequence ID" value="AAC22219.1"/>
    <property type="molecule type" value="Genomic_DNA"/>
</dbReference>
<dbReference type="RefSeq" id="NP_438717.1">
    <property type="nucleotide sequence ID" value="NC_000907.1"/>
</dbReference>
<dbReference type="STRING" id="71421.HI_0559.1"/>
<dbReference type="EnsemblBacteria" id="AAC22219">
    <property type="protein sequence ID" value="AAC22219"/>
    <property type="gene ID" value="HI_0559.1"/>
</dbReference>
<dbReference type="KEGG" id="hin:HI_0559.1"/>
<dbReference type="PATRIC" id="fig|71421.8.peg.580"/>
<dbReference type="eggNOG" id="ENOG5031K81">
    <property type="taxonomic scope" value="Bacteria"/>
</dbReference>
<dbReference type="HOGENOM" id="CLU_151111_0_0_6"/>
<dbReference type="OrthoDB" id="5686406at2"/>
<dbReference type="BioCyc" id="HINF71421:G1GJ1-572-MONOMER"/>
<dbReference type="Proteomes" id="UP000000579">
    <property type="component" value="Chromosome"/>
</dbReference>
<dbReference type="GO" id="GO:0005886">
    <property type="term" value="C:plasma membrane"/>
    <property type="evidence" value="ECO:0007669"/>
    <property type="project" value="UniProtKB-SubCell"/>
</dbReference>
<gene>
    <name type="ordered locus">HI_0559.1</name>
</gene>
<accession>O86226</accession>
<feature type="chain" id="PRO_0000077934" description="Uncharacterized protein HI_0559.1">
    <location>
        <begin position="1"/>
        <end position="115"/>
    </location>
</feature>
<feature type="transmembrane region" description="Helical" evidence="1">
    <location>
        <begin position="7"/>
        <end position="27"/>
    </location>
</feature>
<feature type="transmembrane region" description="Helical" evidence="1">
    <location>
        <begin position="40"/>
        <end position="60"/>
    </location>
</feature>
<feature type="transmembrane region" description="Helical" evidence="1">
    <location>
        <begin position="72"/>
        <end position="92"/>
    </location>
</feature>
<keyword id="KW-1003">Cell membrane</keyword>
<keyword id="KW-0472">Membrane</keyword>
<keyword id="KW-1185">Reference proteome</keyword>
<keyword id="KW-0812">Transmembrane</keyword>
<keyword id="KW-1133">Transmembrane helix</keyword>
<protein>
    <recommendedName>
        <fullName>Uncharacterized protein HI_0559.1</fullName>
    </recommendedName>
</protein>
<name>Y559A_HAEIN</name>
<organism>
    <name type="scientific">Haemophilus influenzae (strain ATCC 51907 / DSM 11121 / KW20 / Rd)</name>
    <dbReference type="NCBI Taxonomy" id="71421"/>
    <lineage>
        <taxon>Bacteria</taxon>
        <taxon>Pseudomonadati</taxon>
        <taxon>Pseudomonadota</taxon>
        <taxon>Gammaproteobacteria</taxon>
        <taxon>Pasteurellales</taxon>
        <taxon>Pasteurellaceae</taxon>
        <taxon>Haemophilus</taxon>
    </lineage>
</organism>
<reference key="1">
    <citation type="journal article" date="1995" name="Science">
        <title>Whole-genome random sequencing and assembly of Haemophilus influenzae Rd.</title>
        <authorList>
            <person name="Fleischmann R.D."/>
            <person name="Adams M.D."/>
            <person name="White O."/>
            <person name="Clayton R.A."/>
            <person name="Kirkness E.F."/>
            <person name="Kerlavage A.R."/>
            <person name="Bult C.J."/>
            <person name="Tomb J.-F."/>
            <person name="Dougherty B.A."/>
            <person name="Merrick J.M."/>
            <person name="McKenney K."/>
            <person name="Sutton G.G."/>
            <person name="FitzHugh W."/>
            <person name="Fields C.A."/>
            <person name="Gocayne J.D."/>
            <person name="Scott J.D."/>
            <person name="Shirley R."/>
            <person name="Liu L.-I."/>
            <person name="Glodek A."/>
            <person name="Kelley J.M."/>
            <person name="Weidman J.F."/>
            <person name="Phillips C.A."/>
            <person name="Spriggs T."/>
            <person name="Hedblom E."/>
            <person name="Cotton M.D."/>
            <person name="Utterback T.R."/>
            <person name="Hanna M.C."/>
            <person name="Nguyen D.T."/>
            <person name="Saudek D.M."/>
            <person name="Brandon R.C."/>
            <person name="Fine L.D."/>
            <person name="Fritchman J.L."/>
            <person name="Fuhrmann J.L."/>
            <person name="Geoghagen N.S.M."/>
            <person name="Gnehm C.L."/>
            <person name="McDonald L.A."/>
            <person name="Small K.V."/>
            <person name="Fraser C.M."/>
            <person name="Smith H.O."/>
            <person name="Venter J.C."/>
        </authorList>
    </citation>
    <scope>NUCLEOTIDE SEQUENCE [LARGE SCALE GENOMIC DNA]</scope>
    <source>
        <strain>ATCC 51907 / DSM 11121 / KW20 / Rd</strain>
    </source>
</reference>
<reference key="2">
    <citation type="submission" date="1998-05" db="EMBL/GenBank/DDBJ databases">
        <authorList>
            <person name="White O."/>
            <person name="Clayton R.A."/>
            <person name="Kerlavage A.R."/>
            <person name="Fleischmann R.D."/>
            <person name="Peterson J."/>
            <person name="Hickey E."/>
            <person name="Dodson R."/>
            <person name="Gwinn M."/>
        </authorList>
    </citation>
    <scope>IDENTIFICATION</scope>
</reference>
<sequence length="115" mass="12826">MKSYLKTLIFFPLILQIVVTALLIWFDDDSSGVIVPFSSYALTAFLLAAIPAFLTALLAAKFRYTRYNIASIVLVSSIISFVYCNMASYFYLLLLGEQDTSFWGWLTEGGLSLGL</sequence>
<comment type="subcellular location">
    <subcellularLocation>
        <location evidence="2">Cell membrane</location>
        <topology evidence="2">Multi-pass membrane protein</topology>
    </subcellularLocation>
</comment>
<evidence type="ECO:0000255" key="1"/>
<evidence type="ECO:0000305" key="2"/>
<proteinExistence type="predicted"/>